<name>RADA_PYRFU</name>
<organism>
    <name type="scientific">Pyrococcus furiosus (strain ATCC 43587 / DSM 3638 / JCM 8422 / Vc1)</name>
    <dbReference type="NCBI Taxonomy" id="186497"/>
    <lineage>
        <taxon>Archaea</taxon>
        <taxon>Methanobacteriati</taxon>
        <taxon>Methanobacteriota</taxon>
        <taxon>Thermococci</taxon>
        <taxon>Thermococcales</taxon>
        <taxon>Thermococcaceae</taxon>
        <taxon>Pyrococcus</taxon>
    </lineage>
</organism>
<reference key="1">
    <citation type="journal article" date="1999" name="J. Mol. Evol.">
        <title>DNA repair systems in archaea: mementos from the last universal common ancestor?</title>
        <authorList>
            <person name="DiRuggiero J."/>
            <person name="Brown J.R."/>
            <person name="Bogert A.P."/>
            <person name="Robb F.T."/>
        </authorList>
    </citation>
    <scope>NUCLEOTIDE SEQUENCE [GENOMIC DNA]</scope>
    <source>
        <strain>ATCC 43587 / DSM 3638 / JCM 8422 / Vc1</strain>
    </source>
</reference>
<reference key="2">
    <citation type="journal article" date="1999" name="Genetics">
        <title>Divergence of the hyperthermophilic archaea Pyrococcus furiosus and P. horikoshii inferred from complete genomic sequences.</title>
        <authorList>
            <person name="Maeder D.L."/>
            <person name="Weiss R.B."/>
            <person name="Dunn D.M."/>
            <person name="Cherry J.L."/>
            <person name="Gonzalez J.M."/>
            <person name="DiRuggiero J."/>
            <person name="Robb F.T."/>
        </authorList>
    </citation>
    <scope>NUCLEOTIDE SEQUENCE [LARGE SCALE GENOMIC DNA]</scope>
    <source>
        <strain>ATCC 43587 / DSM 3638 / JCM 8422 / Vc1</strain>
    </source>
</reference>
<reference key="3">
    <citation type="journal article" date="2000" name="J. Biol. Chem.">
        <title>Both RadA and RadB are involved in homologous recombination in Pyrococcus furiosus.</title>
        <authorList>
            <person name="Komori K."/>
            <person name="Miyata T."/>
            <person name="DiRuggiero J."/>
            <person name="Holley-Shanks R."/>
            <person name="Hayashi I."/>
            <person name="Cann I.K.O."/>
            <person name="Mayanagi K."/>
            <person name="Shinagawa H."/>
            <person name="Ishino Y."/>
        </authorList>
    </citation>
    <scope>CHARACTERIZATION</scope>
</reference>
<feature type="chain" id="PRO_0000150104" description="DNA repair and recombination protein RadA">
    <location>
        <begin position="1"/>
        <end position="349"/>
    </location>
</feature>
<feature type="region of interest" description="Disordered" evidence="2">
    <location>
        <begin position="1"/>
        <end position="32"/>
    </location>
</feature>
<feature type="compositionally biased region" description="Acidic residues" evidence="2">
    <location>
        <begin position="7"/>
        <end position="16"/>
    </location>
</feature>
<feature type="binding site" evidence="1">
    <location>
        <begin position="138"/>
        <end position="145"/>
    </location>
    <ligand>
        <name>ATP</name>
        <dbReference type="ChEBI" id="CHEBI:30616"/>
    </ligand>
</feature>
<feature type="helix" evidence="4">
    <location>
        <begin position="45"/>
        <end position="52"/>
    </location>
</feature>
<feature type="turn" evidence="4">
    <location>
        <begin position="53"/>
        <end position="55"/>
    </location>
</feature>
<feature type="helix" evidence="4">
    <location>
        <begin position="59"/>
        <end position="63"/>
    </location>
</feature>
<feature type="helix" evidence="4">
    <location>
        <begin position="67"/>
        <end position="74"/>
    </location>
</feature>
<feature type="helix" evidence="4">
    <location>
        <begin position="78"/>
        <end position="91"/>
    </location>
</feature>
<feature type="helix" evidence="5">
    <location>
        <begin position="100"/>
        <end position="107"/>
    </location>
</feature>
<feature type="helix" evidence="6">
    <location>
        <begin position="118"/>
        <end position="123"/>
    </location>
</feature>
<feature type="turn" evidence="6">
    <location>
        <begin position="124"/>
        <end position="126"/>
    </location>
</feature>
<feature type="strand" evidence="6">
    <location>
        <begin position="127"/>
        <end position="139"/>
    </location>
</feature>
<feature type="helix" evidence="6">
    <location>
        <begin position="144"/>
        <end position="154"/>
    </location>
</feature>
<feature type="helix" evidence="6">
    <location>
        <begin position="159"/>
        <end position="161"/>
    </location>
</feature>
<feature type="strand" evidence="6">
    <location>
        <begin position="167"/>
        <end position="175"/>
    </location>
</feature>
<feature type="helix" evidence="6">
    <location>
        <begin position="179"/>
        <end position="188"/>
    </location>
</feature>
<feature type="helix" evidence="6">
    <location>
        <begin position="193"/>
        <end position="198"/>
    </location>
</feature>
<feature type="strand" evidence="6">
    <location>
        <begin position="200"/>
        <end position="204"/>
    </location>
</feature>
<feature type="helix" evidence="6">
    <location>
        <begin position="208"/>
        <end position="225"/>
    </location>
</feature>
<feature type="strand" evidence="6">
    <location>
        <begin position="228"/>
        <end position="230"/>
    </location>
</feature>
<feature type="strand" evidence="6">
    <location>
        <begin position="232"/>
        <end position="238"/>
    </location>
</feature>
<feature type="turn" evidence="6">
    <location>
        <begin position="239"/>
        <end position="241"/>
    </location>
</feature>
<feature type="helix" evidence="6">
    <location>
        <begin position="242"/>
        <end position="247"/>
    </location>
</feature>
<feature type="turn" evidence="8">
    <location>
        <begin position="248"/>
        <end position="250"/>
    </location>
</feature>
<feature type="helix" evidence="6">
    <location>
        <begin position="253"/>
        <end position="275"/>
    </location>
</feature>
<feature type="strand" evidence="6">
    <location>
        <begin position="278"/>
        <end position="284"/>
    </location>
</feature>
<feature type="turn" evidence="7">
    <location>
        <begin position="304"/>
        <end position="307"/>
    </location>
</feature>
<feature type="strand" evidence="6">
    <location>
        <begin position="310"/>
        <end position="317"/>
    </location>
</feature>
<feature type="helix" evidence="6">
    <location>
        <begin position="319"/>
        <end position="321"/>
    </location>
</feature>
<feature type="strand" evidence="6">
    <location>
        <begin position="323"/>
        <end position="329"/>
    </location>
</feature>
<feature type="strand" evidence="9">
    <location>
        <begin position="331"/>
        <end position="333"/>
    </location>
</feature>
<feature type="strand" evidence="6">
    <location>
        <begin position="338"/>
        <end position="343"/>
    </location>
</feature>
<feature type="strand" evidence="6">
    <location>
        <begin position="346"/>
        <end position="348"/>
    </location>
</feature>
<proteinExistence type="evidence at protein level"/>
<comment type="function">
    <text>Involved in DNA repair and in homologous recombination. Binds and assemble on single-stranded DNA to form a nucleoprotein filament. Hydrolyzes ATP in a ssDNA-dependent manner and promotes DNA strand exchange between homologous DNA molecules.</text>
</comment>
<comment type="similarity">
    <text evidence="3">Belongs to the eukaryotic RecA-like protein family.</text>
</comment>
<accession>O74036</accession>
<sequence length="349" mass="38399">MAGEEVKEIDEFEELGFEPATEETPKKKKKEKIIRSIEDLPGVGPATAEKLREAGYDTLEAIAVASPIELKEVAGISEGTALKIIQAARKAANLGTFMRADEYLKKRATIGRISTGSKSLDKLLGGGIETQAITEVFGEFGSGKTQLAHTLAVMVQLPPEEGGLNGSVIWIDTENTFRPERIREIAQNRGLDPDEVLKHIYVARAFNSNHQMLLVQQAEDKIKELLNTDRPVKLLIVDSLTSHFRSEYIGRGALAERQQKLAKHLADLHRLANLYDIAVFVTNQVQARPDAFFGDPTRPIGGHILAHSATLRVYLRKGKGGKRIARLIDAPHLPEGEAVFSITEKGIED</sequence>
<keyword id="KW-0002">3D-structure</keyword>
<keyword id="KW-0067">ATP-binding</keyword>
<keyword id="KW-0227">DNA damage</keyword>
<keyword id="KW-0233">DNA recombination</keyword>
<keyword id="KW-0238">DNA-binding</keyword>
<keyword id="KW-0547">Nucleotide-binding</keyword>
<keyword id="KW-1185">Reference proteome</keyword>
<gene>
    <name type="primary">radA</name>
    <name type="ordered locus">PF1926</name>
</gene>
<dbReference type="EMBL" id="AF052597">
    <property type="protein sequence ID" value="AAC34998.1"/>
    <property type="molecule type" value="Genomic_DNA"/>
</dbReference>
<dbReference type="EMBL" id="AE009950">
    <property type="protein sequence ID" value="AAL82050.1"/>
    <property type="molecule type" value="Genomic_DNA"/>
</dbReference>
<dbReference type="RefSeq" id="WP_011013066.1">
    <property type="nucleotide sequence ID" value="NZ_CP023154.1"/>
</dbReference>
<dbReference type="PDB" id="1PZN">
    <property type="method" value="X-ray"/>
    <property type="resolution" value="2.85 A"/>
    <property type="chains" value="A/B/C/D/E/F/G=1-349"/>
</dbReference>
<dbReference type="PDB" id="4A6P">
    <property type="method" value="X-ray"/>
    <property type="resolution" value="1.50 A"/>
    <property type="chains" value="A=108-349"/>
</dbReference>
<dbReference type="PDB" id="4A6X">
    <property type="method" value="X-ray"/>
    <property type="resolution" value="1.55 A"/>
    <property type="chains" value="A/B=108-349"/>
</dbReference>
<dbReference type="PDB" id="4B2I">
    <property type="method" value="X-ray"/>
    <property type="resolution" value="1.30 A"/>
    <property type="chains" value="A=108-349"/>
</dbReference>
<dbReference type="PDB" id="4B2L">
    <property type="method" value="X-ray"/>
    <property type="resolution" value="1.50 A"/>
    <property type="chains" value="A=108-349"/>
</dbReference>
<dbReference type="PDB" id="4B2P">
    <property type="method" value="X-ray"/>
    <property type="resolution" value="1.60 A"/>
    <property type="chains" value="A=108-349"/>
</dbReference>
<dbReference type="PDB" id="4B32">
    <property type="method" value="X-ray"/>
    <property type="resolution" value="1.50 A"/>
    <property type="chains" value="A=108-349"/>
</dbReference>
<dbReference type="PDB" id="4B33">
    <property type="method" value="X-ray"/>
    <property type="resolution" value="1.50 A"/>
    <property type="chains" value="A=108-349"/>
</dbReference>
<dbReference type="PDB" id="4B34">
    <property type="method" value="X-ray"/>
    <property type="resolution" value="1.55 A"/>
    <property type="chains" value="A=108-349"/>
</dbReference>
<dbReference type="PDB" id="4B35">
    <property type="method" value="X-ray"/>
    <property type="resolution" value="1.40 A"/>
    <property type="chains" value="A=108-349"/>
</dbReference>
<dbReference type="PDB" id="4B3B">
    <property type="method" value="X-ray"/>
    <property type="resolution" value="1.19 A"/>
    <property type="chains" value="A=108-349"/>
</dbReference>
<dbReference type="PDB" id="4B3C">
    <property type="method" value="X-ray"/>
    <property type="resolution" value="1.90 A"/>
    <property type="chains" value="A=108-349"/>
</dbReference>
<dbReference type="PDB" id="4B3D">
    <property type="method" value="X-ray"/>
    <property type="resolution" value="1.59 A"/>
    <property type="chains" value="A/C=108-349"/>
</dbReference>
<dbReference type="PDB" id="4D6P">
    <property type="method" value="X-ray"/>
    <property type="resolution" value="1.48 A"/>
    <property type="chains" value="A/B=108-349"/>
</dbReference>
<dbReference type="PDB" id="4UQO">
    <property type="method" value="X-ray"/>
    <property type="resolution" value="1.88 A"/>
    <property type="chains" value="A/B=108-349"/>
</dbReference>
<dbReference type="PDB" id="5FOS">
    <property type="method" value="X-ray"/>
    <property type="resolution" value="1.35 A"/>
    <property type="chains" value="A=108-349, C=93-108"/>
</dbReference>
<dbReference type="PDB" id="5FOT">
    <property type="method" value="X-ray"/>
    <property type="resolution" value="1.19 A"/>
    <property type="chains" value="A=108-349"/>
</dbReference>
<dbReference type="PDB" id="5FOU">
    <property type="method" value="X-ray"/>
    <property type="resolution" value="1.50 A"/>
    <property type="chains" value="A=108-349"/>
</dbReference>
<dbReference type="PDB" id="5FOV">
    <property type="method" value="X-ray"/>
    <property type="resolution" value="1.74 A"/>
    <property type="chains" value="A/C=108-349"/>
</dbReference>
<dbReference type="PDB" id="5FOW">
    <property type="method" value="X-ray"/>
    <property type="resolution" value="1.80 A"/>
    <property type="chains" value="A/C=108-349"/>
</dbReference>
<dbReference type="PDB" id="5FOX">
    <property type="method" value="X-ray"/>
    <property type="resolution" value="1.30 A"/>
    <property type="chains" value="A=108-349"/>
</dbReference>
<dbReference type="PDB" id="5FPK">
    <property type="method" value="X-ray"/>
    <property type="resolution" value="1.34 A"/>
    <property type="chains" value="A=108-349"/>
</dbReference>
<dbReference type="PDB" id="5J4H">
    <property type="method" value="X-ray"/>
    <property type="resolution" value="1.37 A"/>
    <property type="chains" value="A=108-349"/>
</dbReference>
<dbReference type="PDB" id="5J4K">
    <property type="method" value="X-ray"/>
    <property type="resolution" value="1.35 A"/>
    <property type="chains" value="A=108-349"/>
</dbReference>
<dbReference type="PDB" id="5J4L">
    <property type="method" value="X-ray"/>
    <property type="resolution" value="1.13 A"/>
    <property type="chains" value="A=108-349"/>
</dbReference>
<dbReference type="PDB" id="5JEC">
    <property type="method" value="X-ray"/>
    <property type="resolution" value="2.34 A"/>
    <property type="chains" value="A/B=108-349"/>
</dbReference>
<dbReference type="PDB" id="5JED">
    <property type="method" value="X-ray"/>
    <property type="resolution" value="1.33 A"/>
    <property type="chains" value="A=108-349"/>
</dbReference>
<dbReference type="PDB" id="5JEE">
    <property type="method" value="X-ray"/>
    <property type="resolution" value="1.49 A"/>
    <property type="chains" value="A=108-349"/>
</dbReference>
<dbReference type="PDB" id="5JFG">
    <property type="method" value="X-ray"/>
    <property type="resolution" value="1.77 A"/>
    <property type="chains" value="A=108-349"/>
</dbReference>
<dbReference type="PDB" id="5KDD">
    <property type="method" value="X-ray"/>
    <property type="resolution" value="1.99 A"/>
    <property type="chains" value="A/B=108-349"/>
</dbReference>
<dbReference type="PDB" id="5L8V">
    <property type="method" value="X-ray"/>
    <property type="resolution" value="1.50 A"/>
    <property type="chains" value="A=108-349"/>
</dbReference>
<dbReference type="PDB" id="5LB2">
    <property type="method" value="X-ray"/>
    <property type="resolution" value="2.10 A"/>
    <property type="chains" value="A=108-349"/>
</dbReference>
<dbReference type="PDB" id="5LB4">
    <property type="method" value="X-ray"/>
    <property type="resolution" value="1.98 A"/>
    <property type="chains" value="A=108-349"/>
</dbReference>
<dbReference type="PDB" id="5LBI">
    <property type="method" value="X-ray"/>
    <property type="resolution" value="1.43 A"/>
    <property type="chains" value="A=108-287, A=301-349"/>
</dbReference>
<dbReference type="PDB" id="5QUB">
    <property type="method" value="X-ray"/>
    <property type="resolution" value="1.35 A"/>
    <property type="chains" value="A=108-349"/>
</dbReference>
<dbReference type="PDB" id="5QUC">
    <property type="method" value="X-ray"/>
    <property type="resolution" value="1.43 A"/>
    <property type="chains" value="A=108-349"/>
</dbReference>
<dbReference type="PDB" id="5QUD">
    <property type="method" value="X-ray"/>
    <property type="resolution" value="1.30 A"/>
    <property type="chains" value="A=108-349"/>
</dbReference>
<dbReference type="PDB" id="5QUE">
    <property type="method" value="X-ray"/>
    <property type="resolution" value="1.30 A"/>
    <property type="chains" value="A=108-349"/>
</dbReference>
<dbReference type="PDB" id="5QUF">
    <property type="method" value="X-ray"/>
    <property type="resolution" value="1.35 A"/>
    <property type="chains" value="A=108-349"/>
</dbReference>
<dbReference type="PDB" id="5QUG">
    <property type="method" value="X-ray"/>
    <property type="resolution" value="1.48 A"/>
    <property type="chains" value="A=108-349"/>
</dbReference>
<dbReference type="PDB" id="5QUH">
    <property type="method" value="X-ray"/>
    <property type="resolution" value="1.38 A"/>
    <property type="chains" value="A=108-349"/>
</dbReference>
<dbReference type="PDB" id="5QUI">
    <property type="method" value="X-ray"/>
    <property type="resolution" value="1.40 A"/>
    <property type="chains" value="A=108-349"/>
</dbReference>
<dbReference type="PDB" id="5QUJ">
    <property type="method" value="X-ray"/>
    <property type="resolution" value="1.42 A"/>
    <property type="chains" value="A=108-349"/>
</dbReference>
<dbReference type="PDB" id="5QUK">
    <property type="method" value="X-ray"/>
    <property type="resolution" value="1.16 A"/>
    <property type="chains" value="A=108-349"/>
</dbReference>
<dbReference type="PDB" id="5QUL">
    <property type="method" value="X-ray"/>
    <property type="resolution" value="1.28 A"/>
    <property type="chains" value="A/B=108-349"/>
</dbReference>
<dbReference type="PDB" id="5QUM">
    <property type="method" value="X-ray"/>
    <property type="resolution" value="1.93 A"/>
    <property type="chains" value="A/B=108-349"/>
</dbReference>
<dbReference type="PDB" id="5QUN">
    <property type="method" value="X-ray"/>
    <property type="resolution" value="1.24 A"/>
    <property type="chains" value="A=108-349"/>
</dbReference>
<dbReference type="PDB" id="5QUO">
    <property type="method" value="X-ray"/>
    <property type="resolution" value="1.34 A"/>
    <property type="chains" value="A=108-349"/>
</dbReference>
<dbReference type="PDB" id="5QUP">
    <property type="method" value="X-ray"/>
    <property type="resolution" value="1.25 A"/>
    <property type="chains" value="A=108-349"/>
</dbReference>
<dbReference type="PDB" id="5QUQ">
    <property type="method" value="X-ray"/>
    <property type="resolution" value="1.25 A"/>
    <property type="chains" value="A=108-349"/>
</dbReference>
<dbReference type="PDB" id="5QUR">
    <property type="method" value="X-ray"/>
    <property type="resolution" value="1.25 A"/>
    <property type="chains" value="A=108-349"/>
</dbReference>
<dbReference type="PDB" id="5QUS">
    <property type="method" value="X-ray"/>
    <property type="resolution" value="1.25 A"/>
    <property type="chains" value="A=108-349"/>
</dbReference>
<dbReference type="PDB" id="5QUT">
    <property type="method" value="X-ray"/>
    <property type="resolution" value="1.25 A"/>
    <property type="chains" value="A=108-349"/>
</dbReference>
<dbReference type="PDB" id="5QUU">
    <property type="method" value="X-ray"/>
    <property type="resolution" value="1.25 A"/>
    <property type="chains" value="A=108-349"/>
</dbReference>
<dbReference type="PDB" id="6TUU">
    <property type="method" value="X-ray"/>
    <property type="resolution" value="1.74 A"/>
    <property type="chains" value="A/B/C/D=108-349"/>
</dbReference>
<dbReference type="PDB" id="6TV3">
    <property type="method" value="X-ray"/>
    <property type="resolution" value="1.50 A"/>
    <property type="chains" value="A=108-349"/>
</dbReference>
<dbReference type="PDB" id="6TW3">
    <property type="method" value="X-ray"/>
    <property type="resolution" value="1.35 A"/>
    <property type="chains" value="A=108-349"/>
</dbReference>
<dbReference type="PDB" id="6TW4">
    <property type="method" value="X-ray"/>
    <property type="resolution" value="1.73 A"/>
    <property type="chains" value="A=108-349"/>
</dbReference>
<dbReference type="PDB" id="6TW9">
    <property type="method" value="X-ray"/>
    <property type="resolution" value="1.52 A"/>
    <property type="chains" value="A=108-349"/>
</dbReference>
<dbReference type="PDB" id="6XTW">
    <property type="method" value="X-ray"/>
    <property type="resolution" value="2.31 A"/>
    <property type="chains" value="A/B=108-349"/>
</dbReference>
<dbReference type="PDB" id="6XUF">
    <property type="method" value="X-ray"/>
    <property type="resolution" value="1.24 A"/>
    <property type="chains" value="A=108-349"/>
</dbReference>
<dbReference type="PDB" id="6XUJ">
    <property type="method" value="X-ray"/>
    <property type="resolution" value="1.54 A"/>
    <property type="chains" value="A=108-349"/>
</dbReference>
<dbReference type="PDB" id="8BR9">
    <property type="method" value="X-ray"/>
    <property type="resolution" value="1.63 A"/>
    <property type="chains" value="A=107-349"/>
</dbReference>
<dbReference type="PDB" id="8C3N">
    <property type="method" value="X-ray"/>
    <property type="resolution" value="1.21 A"/>
    <property type="chains" value="A=107-349"/>
</dbReference>
<dbReference type="PDBsum" id="1PZN"/>
<dbReference type="PDBsum" id="4A6P"/>
<dbReference type="PDBsum" id="4A6X"/>
<dbReference type="PDBsum" id="4B2I"/>
<dbReference type="PDBsum" id="4B2L"/>
<dbReference type="PDBsum" id="4B2P"/>
<dbReference type="PDBsum" id="4B32"/>
<dbReference type="PDBsum" id="4B33"/>
<dbReference type="PDBsum" id="4B34"/>
<dbReference type="PDBsum" id="4B35"/>
<dbReference type="PDBsum" id="4B3B"/>
<dbReference type="PDBsum" id="4B3C"/>
<dbReference type="PDBsum" id="4B3D"/>
<dbReference type="PDBsum" id="4D6P"/>
<dbReference type="PDBsum" id="4UQO"/>
<dbReference type="PDBsum" id="5FOS"/>
<dbReference type="PDBsum" id="5FOT"/>
<dbReference type="PDBsum" id="5FOU"/>
<dbReference type="PDBsum" id="5FOV"/>
<dbReference type="PDBsum" id="5FOW"/>
<dbReference type="PDBsum" id="5FOX"/>
<dbReference type="PDBsum" id="5FPK"/>
<dbReference type="PDBsum" id="5J4H"/>
<dbReference type="PDBsum" id="5J4K"/>
<dbReference type="PDBsum" id="5J4L"/>
<dbReference type="PDBsum" id="5JEC"/>
<dbReference type="PDBsum" id="5JED"/>
<dbReference type="PDBsum" id="5JEE"/>
<dbReference type="PDBsum" id="5JFG"/>
<dbReference type="PDBsum" id="5KDD"/>
<dbReference type="PDBsum" id="5L8V"/>
<dbReference type="PDBsum" id="5LB2"/>
<dbReference type="PDBsum" id="5LB4"/>
<dbReference type="PDBsum" id="5LBI"/>
<dbReference type="PDBsum" id="5QUB"/>
<dbReference type="PDBsum" id="5QUC"/>
<dbReference type="PDBsum" id="5QUD"/>
<dbReference type="PDBsum" id="5QUE"/>
<dbReference type="PDBsum" id="5QUF"/>
<dbReference type="PDBsum" id="5QUG"/>
<dbReference type="PDBsum" id="5QUH"/>
<dbReference type="PDBsum" id="5QUI"/>
<dbReference type="PDBsum" id="5QUJ"/>
<dbReference type="PDBsum" id="5QUK"/>
<dbReference type="PDBsum" id="5QUL"/>
<dbReference type="PDBsum" id="5QUM"/>
<dbReference type="PDBsum" id="5QUN"/>
<dbReference type="PDBsum" id="5QUO"/>
<dbReference type="PDBsum" id="5QUP"/>
<dbReference type="PDBsum" id="5QUQ"/>
<dbReference type="PDBsum" id="5QUR"/>
<dbReference type="PDBsum" id="5QUS"/>
<dbReference type="PDBsum" id="5QUT"/>
<dbReference type="PDBsum" id="5QUU"/>
<dbReference type="PDBsum" id="6TUU"/>
<dbReference type="PDBsum" id="6TV3"/>
<dbReference type="PDBsum" id="6TW3"/>
<dbReference type="PDBsum" id="6TW4"/>
<dbReference type="PDBsum" id="6TW9"/>
<dbReference type="PDBsum" id="6XTW"/>
<dbReference type="PDBsum" id="6XUF"/>
<dbReference type="PDBsum" id="6XUJ"/>
<dbReference type="PDBsum" id="8BR9"/>
<dbReference type="PDBsum" id="8C3N"/>
<dbReference type="SMR" id="O74036"/>
<dbReference type="STRING" id="186497.PF1926"/>
<dbReference type="BindingDB" id="O74036"/>
<dbReference type="PaxDb" id="186497-PF1926"/>
<dbReference type="GeneID" id="41713747"/>
<dbReference type="KEGG" id="pfu:PF1926"/>
<dbReference type="PATRIC" id="fig|186497.12.peg.1998"/>
<dbReference type="eggNOG" id="arCOG00415">
    <property type="taxonomic scope" value="Archaea"/>
</dbReference>
<dbReference type="HOGENOM" id="CLU_041732_0_0_2"/>
<dbReference type="OrthoDB" id="31129at2157"/>
<dbReference type="PhylomeDB" id="O74036"/>
<dbReference type="BRENDA" id="3.6.4.B7">
    <property type="organism ID" value="5243"/>
</dbReference>
<dbReference type="EvolutionaryTrace" id="O74036"/>
<dbReference type="Proteomes" id="UP000001013">
    <property type="component" value="Chromosome"/>
</dbReference>
<dbReference type="GO" id="GO:0005524">
    <property type="term" value="F:ATP binding"/>
    <property type="evidence" value="ECO:0007669"/>
    <property type="project" value="UniProtKB-UniRule"/>
</dbReference>
<dbReference type="GO" id="GO:0016887">
    <property type="term" value="F:ATP hydrolysis activity"/>
    <property type="evidence" value="ECO:0007669"/>
    <property type="project" value="InterPro"/>
</dbReference>
<dbReference type="GO" id="GO:0140664">
    <property type="term" value="F:ATP-dependent DNA damage sensor activity"/>
    <property type="evidence" value="ECO:0007669"/>
    <property type="project" value="InterPro"/>
</dbReference>
<dbReference type="GO" id="GO:0003684">
    <property type="term" value="F:damaged DNA binding"/>
    <property type="evidence" value="ECO:0007669"/>
    <property type="project" value="UniProtKB-UniRule"/>
</dbReference>
<dbReference type="GO" id="GO:0006310">
    <property type="term" value="P:DNA recombination"/>
    <property type="evidence" value="ECO:0007669"/>
    <property type="project" value="UniProtKB-UniRule"/>
</dbReference>
<dbReference type="GO" id="GO:0006281">
    <property type="term" value="P:DNA repair"/>
    <property type="evidence" value="ECO:0007669"/>
    <property type="project" value="UniProtKB-UniRule"/>
</dbReference>
<dbReference type="CDD" id="cd19515">
    <property type="entry name" value="archRadA"/>
    <property type="match status" value="1"/>
</dbReference>
<dbReference type="FunFam" id="3.40.50.300:FF:002052">
    <property type="entry name" value="DNA repair protein RAD51 homolog"/>
    <property type="match status" value="1"/>
</dbReference>
<dbReference type="Gene3D" id="1.10.150.20">
    <property type="entry name" value="5' to 3' exonuclease, C-terminal subdomain"/>
    <property type="match status" value="1"/>
</dbReference>
<dbReference type="Gene3D" id="3.40.50.300">
    <property type="entry name" value="P-loop containing nucleotide triphosphate hydrolases"/>
    <property type="match status" value="1"/>
</dbReference>
<dbReference type="HAMAP" id="MF_00348">
    <property type="entry name" value="RadA_arch"/>
    <property type="match status" value="1"/>
</dbReference>
<dbReference type="InterPro" id="IPR003593">
    <property type="entry name" value="AAA+_ATPase"/>
</dbReference>
<dbReference type="InterPro" id="IPR013632">
    <property type="entry name" value="DNA_recomb/repair_Rad51_C"/>
</dbReference>
<dbReference type="InterPro" id="IPR011938">
    <property type="entry name" value="DNA_recomb/repair_RadA"/>
</dbReference>
<dbReference type="InterPro" id="IPR016467">
    <property type="entry name" value="DNA_recomb/repair_RecA-like"/>
</dbReference>
<dbReference type="InterPro" id="IPR010995">
    <property type="entry name" value="DNA_repair_Rad51/TF_NusA_a-hlx"/>
</dbReference>
<dbReference type="InterPro" id="IPR003583">
    <property type="entry name" value="Hlx-hairpin-Hlx_DNA-bd_motif"/>
</dbReference>
<dbReference type="InterPro" id="IPR027417">
    <property type="entry name" value="P-loop_NTPase"/>
</dbReference>
<dbReference type="InterPro" id="IPR020588">
    <property type="entry name" value="RecA_ATP-bd"/>
</dbReference>
<dbReference type="InterPro" id="IPR020587">
    <property type="entry name" value="RecA_monomer-monomer_interface"/>
</dbReference>
<dbReference type="NCBIfam" id="NF003301">
    <property type="entry name" value="PRK04301.1"/>
    <property type="match status" value="1"/>
</dbReference>
<dbReference type="NCBIfam" id="TIGR02236">
    <property type="entry name" value="recomb_radA"/>
    <property type="match status" value="1"/>
</dbReference>
<dbReference type="PANTHER" id="PTHR22942:SF30">
    <property type="entry name" value="MEIOTIC RECOMBINATION PROTEIN DMC1_LIM15 HOMOLOG"/>
    <property type="match status" value="1"/>
</dbReference>
<dbReference type="PANTHER" id="PTHR22942">
    <property type="entry name" value="RECA/RAD51/RADA DNA STRAND-PAIRING FAMILY MEMBER"/>
    <property type="match status" value="1"/>
</dbReference>
<dbReference type="Pfam" id="PF14520">
    <property type="entry name" value="HHH_5"/>
    <property type="match status" value="1"/>
</dbReference>
<dbReference type="Pfam" id="PF08423">
    <property type="entry name" value="Rad51"/>
    <property type="match status" value="1"/>
</dbReference>
<dbReference type="PIRSF" id="PIRSF005856">
    <property type="entry name" value="Rad51"/>
    <property type="match status" value="1"/>
</dbReference>
<dbReference type="SMART" id="SM00382">
    <property type="entry name" value="AAA"/>
    <property type="match status" value="1"/>
</dbReference>
<dbReference type="SMART" id="SM00278">
    <property type="entry name" value="HhH1"/>
    <property type="match status" value="2"/>
</dbReference>
<dbReference type="SUPFAM" id="SSF52540">
    <property type="entry name" value="P-loop containing nucleoside triphosphate hydrolases"/>
    <property type="match status" value="1"/>
</dbReference>
<dbReference type="SUPFAM" id="SSF47794">
    <property type="entry name" value="Rad51 N-terminal domain-like"/>
    <property type="match status" value="1"/>
</dbReference>
<dbReference type="PROSITE" id="PS50162">
    <property type="entry name" value="RECA_2"/>
    <property type="match status" value="1"/>
</dbReference>
<dbReference type="PROSITE" id="PS50163">
    <property type="entry name" value="RECA_3"/>
    <property type="match status" value="1"/>
</dbReference>
<evidence type="ECO:0000255" key="1"/>
<evidence type="ECO:0000256" key="2">
    <source>
        <dbReference type="SAM" id="MobiDB-lite"/>
    </source>
</evidence>
<evidence type="ECO:0000305" key="3"/>
<evidence type="ECO:0007829" key="4">
    <source>
        <dbReference type="PDB" id="1PZN"/>
    </source>
</evidence>
<evidence type="ECO:0007829" key="5">
    <source>
        <dbReference type="PDB" id="5FOS"/>
    </source>
</evidence>
<evidence type="ECO:0007829" key="6">
    <source>
        <dbReference type="PDB" id="5J4L"/>
    </source>
</evidence>
<evidence type="ECO:0007829" key="7">
    <source>
        <dbReference type="PDB" id="5QUD"/>
    </source>
</evidence>
<evidence type="ECO:0007829" key="8">
    <source>
        <dbReference type="PDB" id="5QUK"/>
    </source>
</evidence>
<evidence type="ECO:0007829" key="9">
    <source>
        <dbReference type="PDB" id="6XUF"/>
    </source>
</evidence>
<protein>
    <recommendedName>
        <fullName>DNA repair and recombination protein RadA</fullName>
    </recommendedName>
</protein>